<comment type="function">
    <text evidence="1">One of the primary rRNA binding proteins, this protein initially binds near the 5'-end of the 23S rRNA. It is important during the early stages of 50S assembly. It makes multiple contacts with different domains of the 23S rRNA in the assembled 50S subunit and ribosome.</text>
</comment>
<comment type="function">
    <text evidence="1">Forms part of the polypeptide exit tunnel.</text>
</comment>
<comment type="subunit">
    <text evidence="1">Part of the 50S ribosomal subunit.</text>
</comment>
<comment type="similarity">
    <text evidence="1">Belongs to the universal ribosomal protein uL4 family.</text>
</comment>
<reference key="1">
    <citation type="submission" date="2006-05" db="EMBL/GenBank/DDBJ databases">
        <title>Complete sequence of chromosome of Silicibacter sp. TM1040.</title>
        <authorList>
            <consortium name="US DOE Joint Genome Institute"/>
            <person name="Copeland A."/>
            <person name="Lucas S."/>
            <person name="Lapidus A."/>
            <person name="Barry K."/>
            <person name="Detter J.C."/>
            <person name="Glavina del Rio T."/>
            <person name="Hammon N."/>
            <person name="Israni S."/>
            <person name="Dalin E."/>
            <person name="Tice H."/>
            <person name="Pitluck S."/>
            <person name="Brettin T."/>
            <person name="Bruce D."/>
            <person name="Han C."/>
            <person name="Tapia R."/>
            <person name="Goodwin L."/>
            <person name="Thompson L.S."/>
            <person name="Gilna P."/>
            <person name="Schmutz J."/>
            <person name="Larimer F."/>
            <person name="Land M."/>
            <person name="Hauser L."/>
            <person name="Kyrpides N."/>
            <person name="Kim E."/>
            <person name="Belas R."/>
            <person name="Moran M.A."/>
            <person name="Buchan A."/>
            <person name="Gonzalez J.M."/>
            <person name="Schell M.A."/>
            <person name="Sun F."/>
            <person name="Richardson P."/>
        </authorList>
    </citation>
    <scope>NUCLEOTIDE SEQUENCE [LARGE SCALE GENOMIC DNA]</scope>
    <source>
        <strain>TM1040</strain>
    </source>
</reference>
<evidence type="ECO:0000255" key="1">
    <source>
        <dbReference type="HAMAP-Rule" id="MF_01328"/>
    </source>
</evidence>
<evidence type="ECO:0000305" key="2"/>
<protein>
    <recommendedName>
        <fullName evidence="1">Large ribosomal subunit protein uL4</fullName>
    </recommendedName>
    <alternativeName>
        <fullName evidence="2">50S ribosomal protein L4</fullName>
    </alternativeName>
</protein>
<organism>
    <name type="scientific">Ruegeria sp. (strain TM1040)</name>
    <name type="common">Silicibacter sp.</name>
    <dbReference type="NCBI Taxonomy" id="292414"/>
    <lineage>
        <taxon>Bacteria</taxon>
        <taxon>Pseudomonadati</taxon>
        <taxon>Pseudomonadota</taxon>
        <taxon>Alphaproteobacteria</taxon>
        <taxon>Rhodobacterales</taxon>
        <taxon>Roseobacteraceae</taxon>
        <taxon>Ruegeria</taxon>
    </lineage>
</organism>
<accession>Q1GK36</accession>
<keyword id="KW-1185">Reference proteome</keyword>
<keyword id="KW-0687">Ribonucleoprotein</keyword>
<keyword id="KW-0689">Ribosomal protein</keyword>
<keyword id="KW-0694">RNA-binding</keyword>
<keyword id="KW-0699">rRNA-binding</keyword>
<feature type="chain" id="PRO_1000052502" description="Large ribosomal subunit protein uL4">
    <location>
        <begin position="1"/>
        <end position="205"/>
    </location>
</feature>
<dbReference type="EMBL" id="CP000377">
    <property type="protein sequence ID" value="ABF62980.1"/>
    <property type="molecule type" value="Genomic_DNA"/>
</dbReference>
<dbReference type="RefSeq" id="WP_011537608.1">
    <property type="nucleotide sequence ID" value="NC_008044.1"/>
</dbReference>
<dbReference type="SMR" id="Q1GK36"/>
<dbReference type="STRING" id="292414.TM1040_0247"/>
<dbReference type="KEGG" id="sit:TM1040_0247"/>
<dbReference type="eggNOG" id="COG0088">
    <property type="taxonomic scope" value="Bacteria"/>
</dbReference>
<dbReference type="HOGENOM" id="CLU_041575_5_1_5"/>
<dbReference type="OrthoDB" id="9803201at2"/>
<dbReference type="Proteomes" id="UP000000636">
    <property type="component" value="Chromosome"/>
</dbReference>
<dbReference type="GO" id="GO:1990904">
    <property type="term" value="C:ribonucleoprotein complex"/>
    <property type="evidence" value="ECO:0007669"/>
    <property type="project" value="UniProtKB-KW"/>
</dbReference>
<dbReference type="GO" id="GO:0005840">
    <property type="term" value="C:ribosome"/>
    <property type="evidence" value="ECO:0007669"/>
    <property type="project" value="UniProtKB-KW"/>
</dbReference>
<dbReference type="GO" id="GO:0019843">
    <property type="term" value="F:rRNA binding"/>
    <property type="evidence" value="ECO:0007669"/>
    <property type="project" value="UniProtKB-UniRule"/>
</dbReference>
<dbReference type="GO" id="GO:0003735">
    <property type="term" value="F:structural constituent of ribosome"/>
    <property type="evidence" value="ECO:0007669"/>
    <property type="project" value="InterPro"/>
</dbReference>
<dbReference type="GO" id="GO:0006412">
    <property type="term" value="P:translation"/>
    <property type="evidence" value="ECO:0007669"/>
    <property type="project" value="UniProtKB-UniRule"/>
</dbReference>
<dbReference type="Gene3D" id="3.40.1370.10">
    <property type="match status" value="1"/>
</dbReference>
<dbReference type="HAMAP" id="MF_01328_B">
    <property type="entry name" value="Ribosomal_uL4_B"/>
    <property type="match status" value="1"/>
</dbReference>
<dbReference type="InterPro" id="IPR002136">
    <property type="entry name" value="Ribosomal_uL4"/>
</dbReference>
<dbReference type="InterPro" id="IPR013005">
    <property type="entry name" value="Ribosomal_uL4-like"/>
</dbReference>
<dbReference type="InterPro" id="IPR023574">
    <property type="entry name" value="Ribosomal_uL4_dom_sf"/>
</dbReference>
<dbReference type="NCBIfam" id="TIGR03953">
    <property type="entry name" value="rplD_bact"/>
    <property type="match status" value="1"/>
</dbReference>
<dbReference type="PANTHER" id="PTHR10746">
    <property type="entry name" value="50S RIBOSOMAL PROTEIN L4"/>
    <property type="match status" value="1"/>
</dbReference>
<dbReference type="PANTHER" id="PTHR10746:SF6">
    <property type="entry name" value="LARGE RIBOSOMAL SUBUNIT PROTEIN UL4M"/>
    <property type="match status" value="1"/>
</dbReference>
<dbReference type="Pfam" id="PF00573">
    <property type="entry name" value="Ribosomal_L4"/>
    <property type="match status" value="1"/>
</dbReference>
<dbReference type="SUPFAM" id="SSF52166">
    <property type="entry name" value="Ribosomal protein L4"/>
    <property type="match status" value="1"/>
</dbReference>
<sequence length="205" mass="22327">MKLDVIKLDGGKAGDIELSEDLFGLEPRADILHRVVRWQRNNAQAGTHKVKTRSETSYSTKKIYRQKGTGGARHGDRNAPIFRKGGIYKGPTPRSHGHDLTKKFRKLGLRHALSAKAKAGELVVIENAEAEGKTAALAKQVANLGWKRALVIDGAAVNEGFARAAKNIEGLDILPSMGANVYDILKRDTLVLTKSAVEALEARLK</sequence>
<gene>
    <name evidence="1" type="primary">rplD</name>
    <name type="ordered locus">TM1040_0247</name>
</gene>
<proteinExistence type="inferred from homology"/>
<name>RL4_RUEST</name>